<organism>
    <name type="scientific">Oryctolagus cuniculus</name>
    <name type="common">Rabbit</name>
    <dbReference type="NCBI Taxonomy" id="9986"/>
    <lineage>
        <taxon>Eukaryota</taxon>
        <taxon>Metazoa</taxon>
        <taxon>Chordata</taxon>
        <taxon>Craniata</taxon>
        <taxon>Vertebrata</taxon>
        <taxon>Euteleostomi</taxon>
        <taxon>Mammalia</taxon>
        <taxon>Eutheria</taxon>
        <taxon>Euarchontoglires</taxon>
        <taxon>Glires</taxon>
        <taxon>Lagomorpha</taxon>
        <taxon>Leporidae</taxon>
        <taxon>Oryctolagus</taxon>
    </lineage>
</organism>
<feature type="chain" id="PRO_0000324169" description="Solute carrier family 22 member 6">
    <location>
        <begin position="1"/>
        <end position="551"/>
    </location>
</feature>
<feature type="topological domain" description="Cytoplasmic" evidence="4">
    <location>
        <begin position="1"/>
        <end position="23"/>
    </location>
</feature>
<feature type="transmembrane region" description="Helical" evidence="4">
    <location>
        <begin position="24"/>
        <end position="44"/>
    </location>
</feature>
<feature type="topological domain" description="Extracellular" evidence="4">
    <location>
        <begin position="45"/>
        <end position="135"/>
    </location>
</feature>
<feature type="transmembrane region" description="Helical" evidence="4">
    <location>
        <begin position="136"/>
        <end position="156"/>
    </location>
</feature>
<feature type="topological domain" description="Cytoplasmic" evidence="4">
    <location>
        <begin position="157"/>
        <end position="164"/>
    </location>
</feature>
<feature type="transmembrane region" description="Helical" evidence="4">
    <location>
        <begin position="165"/>
        <end position="187"/>
    </location>
</feature>
<feature type="topological domain" description="Extracellular" evidence="4">
    <location>
        <begin position="188"/>
        <end position="195"/>
    </location>
</feature>
<feature type="transmembrane region" description="Helical" evidence="4">
    <location>
        <begin position="196"/>
        <end position="216"/>
    </location>
</feature>
<feature type="topological domain" description="Cytoplasmic" evidence="4">
    <location>
        <begin position="217"/>
        <end position="224"/>
    </location>
</feature>
<feature type="transmembrane region" description="Helical" evidence="4">
    <location>
        <begin position="225"/>
        <end position="245"/>
    </location>
</feature>
<feature type="topological domain" description="Extracellular" evidence="4">
    <location>
        <begin position="246"/>
        <end position="248"/>
    </location>
</feature>
<feature type="transmembrane region" description="Helical" evidence="4">
    <location>
        <begin position="249"/>
        <end position="269"/>
    </location>
</feature>
<feature type="topological domain" description="Cytoplasmic" evidence="4">
    <location>
        <begin position="270"/>
        <end position="337"/>
    </location>
</feature>
<feature type="transmembrane region" description="Helical" evidence="4">
    <location>
        <begin position="338"/>
        <end position="358"/>
    </location>
</feature>
<feature type="topological domain" description="Extracellular" evidence="4">
    <location>
        <begin position="359"/>
        <end position="368"/>
    </location>
</feature>
<feature type="transmembrane region" description="Helical" evidence="4">
    <location>
        <begin position="369"/>
        <end position="389"/>
    </location>
</feature>
<feature type="topological domain" description="Cytoplasmic" evidence="4">
    <location>
        <begin position="390"/>
        <end position="395"/>
    </location>
</feature>
<feature type="transmembrane region" description="Helical" evidence="4">
    <location>
        <begin position="396"/>
        <end position="416"/>
    </location>
</feature>
<feature type="topological domain" description="Extracellular" evidence="4">
    <location>
        <begin position="417"/>
        <end position="425"/>
    </location>
</feature>
<feature type="transmembrane region" description="Helical" evidence="4">
    <location>
        <begin position="426"/>
        <end position="446"/>
    </location>
</feature>
<feature type="topological domain" description="Cytoplasmic" evidence="4">
    <location>
        <begin position="447"/>
        <end position="484"/>
    </location>
</feature>
<feature type="transmembrane region" description="Helical" evidence="4">
    <location>
        <begin position="485"/>
        <end position="505"/>
    </location>
</feature>
<feature type="topological domain" description="Extracellular" evidence="4">
    <location>
        <begin position="506"/>
        <end position="551"/>
    </location>
</feature>
<feature type="region of interest" description="Disordered" evidence="5">
    <location>
        <begin position="520"/>
        <end position="551"/>
    </location>
</feature>
<feature type="glycosylation site" description="N-linked (GlcNAc...) asparagine" evidence="4">
    <location>
        <position position="56"/>
    </location>
</feature>
<feature type="glycosylation site" description="N-linked (GlcNAc...) asparagine" evidence="4">
    <location>
        <position position="92"/>
    </location>
</feature>
<feature type="glycosylation site" description="N-linked (GlcNAc...) asparagine" evidence="4">
    <location>
        <position position="113"/>
    </location>
</feature>
<sequence length="551" mass="60589">MAFNDLLKQVGGVGRFQRIQVTLVVLPLLLMASHNTLQNFTAAIPPHHCRPPAHANLSKDGGLQAWLPQDTQGRPKSCLRFTSPQERPPFLNGTEANGTGTTEPCTDGWIYDNSTFPSTIVTEWDLVCSHRALRQLGQSLYMAGVLIGAMVFGYLADRLGRRKVLILNYLQTAVSGTCAAFSPNFTVYCTFRLLSGMSLAGIALNCMTLNVEWMPIHTRAYVGTLAGYVYSTGQFLLAGVAYAVPHWRYLQLLVSVPFFAFFVYSWFFIESARWYSTPGRLDLTLKALQKVARINGKQEEGAKLSMEVLRTNLQKELTMSKGQASAMELLRCPALRHLFLCLSLLWFATSFAYYGLVMDLQGFGVSIYLIQVIFGAVDLPAKLVCFLVINSLGRRPAQMASLLLAGICILVNGVIPRDQSIVRTSLAVLGKGCLASSFNCIFLYTGELYPTMIRQTGLGMGSTMARVGSIVSPLVSMTSELYPSLPLFIYGAVPVAASAATALLPETLGQPLPDTVQDLESRRRGKPRRQQQEQQKQMVPLQASVQEKNGL</sequence>
<proteinExistence type="evidence at transcript level"/>
<protein>
    <recommendedName>
        <fullName>Solute carrier family 22 member 6</fullName>
    </recommendedName>
    <alternativeName>
        <fullName evidence="8">Organic anion transporter 1</fullName>
        <shortName evidence="8">rbOTA1</shortName>
    </alternativeName>
    <alternativeName>
        <fullName evidence="8">Renal organic anion transporter 1</fullName>
    </alternativeName>
    <alternativeName>
        <fullName>rbROAT1</fullName>
    </alternativeName>
</protein>
<name>S22A6_RABIT</name>
<gene>
    <name evidence="2" type="primary">SLC22A6</name>
    <name type="synonym">OAT1</name>
</gene>
<evidence type="ECO:0000250" key="1">
    <source>
        <dbReference type="UniProtKB" id="O35956"/>
    </source>
</evidence>
<evidence type="ECO:0000250" key="2">
    <source>
        <dbReference type="UniProtKB" id="Q4U2R8"/>
    </source>
</evidence>
<evidence type="ECO:0000250" key="3">
    <source>
        <dbReference type="UniProtKB" id="Q8VC69"/>
    </source>
</evidence>
<evidence type="ECO:0000255" key="4"/>
<evidence type="ECO:0000256" key="5">
    <source>
        <dbReference type="SAM" id="MobiDB-lite"/>
    </source>
</evidence>
<evidence type="ECO:0000269" key="6">
    <source>
    </source>
</evidence>
<evidence type="ECO:0000269" key="7">
    <source>
    </source>
</evidence>
<evidence type="ECO:0000303" key="8">
    <source ref="1"/>
</evidence>
<evidence type="ECO:0000305" key="9"/>
<dbReference type="EMBL" id="AJ242871">
    <property type="protein sequence ID" value="CAB62587.1"/>
    <property type="molecule type" value="mRNA"/>
</dbReference>
<dbReference type="RefSeq" id="NP_001075596.1">
    <property type="nucleotide sequence ID" value="NM_001082127.1"/>
</dbReference>
<dbReference type="SMR" id="Q9TSY7"/>
<dbReference type="FunCoup" id="Q9TSY7">
    <property type="interactions" value="4"/>
</dbReference>
<dbReference type="STRING" id="9986.ENSOCUP00000022887"/>
<dbReference type="GlyCosmos" id="Q9TSY7">
    <property type="glycosylation" value="3 sites, No reported glycans"/>
</dbReference>
<dbReference type="PaxDb" id="9986-ENSOCUP00000022887"/>
<dbReference type="GeneID" id="100008851"/>
<dbReference type="KEGG" id="ocu:100008851"/>
<dbReference type="CTD" id="9356"/>
<dbReference type="eggNOG" id="KOG0255">
    <property type="taxonomic scope" value="Eukaryota"/>
</dbReference>
<dbReference type="InParanoid" id="Q9TSY7"/>
<dbReference type="OrthoDB" id="2544694at2759"/>
<dbReference type="Proteomes" id="UP000001811">
    <property type="component" value="Unplaced"/>
</dbReference>
<dbReference type="GO" id="GO:0009925">
    <property type="term" value="C:basal plasma membrane"/>
    <property type="evidence" value="ECO:0000250"/>
    <property type="project" value="UniProtKB"/>
</dbReference>
<dbReference type="GO" id="GO:0016323">
    <property type="term" value="C:basolateral plasma membrane"/>
    <property type="evidence" value="ECO:0000250"/>
    <property type="project" value="UniProtKB"/>
</dbReference>
<dbReference type="GO" id="GO:0015139">
    <property type="term" value="F:alpha-ketoglutarate transmembrane transporter activity"/>
    <property type="evidence" value="ECO:0000250"/>
    <property type="project" value="UniProtKB"/>
</dbReference>
<dbReference type="GO" id="GO:0015297">
    <property type="term" value="F:antiporter activity"/>
    <property type="evidence" value="ECO:0000250"/>
    <property type="project" value="UniProtKB"/>
</dbReference>
<dbReference type="GO" id="GO:0008514">
    <property type="term" value="F:organic anion transmembrane transporter activity"/>
    <property type="evidence" value="ECO:0000250"/>
    <property type="project" value="UniProtKB"/>
</dbReference>
<dbReference type="GO" id="GO:0015132">
    <property type="term" value="F:prostaglandin transmembrane transporter activity"/>
    <property type="evidence" value="ECO:0000250"/>
    <property type="project" value="UniProtKB"/>
</dbReference>
<dbReference type="GO" id="GO:0015347">
    <property type="term" value="F:sodium-independent organic anion transmembrane transporter activity"/>
    <property type="evidence" value="ECO:0000250"/>
    <property type="project" value="UniProtKB"/>
</dbReference>
<dbReference type="GO" id="GO:0022857">
    <property type="term" value="F:transmembrane transporter activity"/>
    <property type="evidence" value="ECO:0000250"/>
    <property type="project" value="UniProtKB"/>
</dbReference>
<dbReference type="GO" id="GO:0042910">
    <property type="term" value="F:xenobiotic transmembrane transporter activity"/>
    <property type="evidence" value="ECO:0000250"/>
    <property type="project" value="UniProtKB"/>
</dbReference>
<dbReference type="GO" id="GO:0015732">
    <property type="term" value="P:prostaglandin transport"/>
    <property type="evidence" value="ECO:0000250"/>
    <property type="project" value="UniProtKB"/>
</dbReference>
<dbReference type="CDD" id="cd17446">
    <property type="entry name" value="MFS_SLC22A6_OAT1_like"/>
    <property type="match status" value="1"/>
</dbReference>
<dbReference type="FunFam" id="1.20.1250.20:FF:000023">
    <property type="entry name" value="Solute carrier family 22 member 6"/>
    <property type="match status" value="1"/>
</dbReference>
<dbReference type="Gene3D" id="1.20.1250.20">
    <property type="entry name" value="MFS general substrate transporter like domains"/>
    <property type="match status" value="1"/>
</dbReference>
<dbReference type="InterPro" id="IPR020846">
    <property type="entry name" value="MFS_dom"/>
</dbReference>
<dbReference type="InterPro" id="IPR005828">
    <property type="entry name" value="MFS_sugar_transport-like"/>
</dbReference>
<dbReference type="InterPro" id="IPR036259">
    <property type="entry name" value="MFS_trans_sf"/>
</dbReference>
<dbReference type="InterPro" id="IPR004749">
    <property type="entry name" value="Orgcat_transp/SVOP"/>
</dbReference>
<dbReference type="NCBIfam" id="TIGR00898">
    <property type="entry name" value="2A0119"/>
    <property type="match status" value="1"/>
</dbReference>
<dbReference type="PANTHER" id="PTHR24064">
    <property type="entry name" value="SOLUTE CARRIER FAMILY 22 MEMBER"/>
    <property type="match status" value="1"/>
</dbReference>
<dbReference type="Pfam" id="PF00083">
    <property type="entry name" value="Sugar_tr"/>
    <property type="match status" value="1"/>
</dbReference>
<dbReference type="SUPFAM" id="SSF103473">
    <property type="entry name" value="MFS general substrate transporter"/>
    <property type="match status" value="1"/>
</dbReference>
<dbReference type="PROSITE" id="PS50850">
    <property type="entry name" value="MFS"/>
    <property type="match status" value="1"/>
</dbReference>
<accession>Q9TSY7</accession>
<keyword id="KW-1003">Cell membrane</keyword>
<keyword id="KW-0325">Glycoprotein</keyword>
<keyword id="KW-0472">Membrane</keyword>
<keyword id="KW-1185">Reference proteome</keyword>
<keyword id="KW-0812">Transmembrane</keyword>
<keyword id="KW-1133">Transmembrane helix</keyword>
<reference key="1">
    <citation type="submission" date="1999-06" db="EMBL/GenBank/DDBJ databases">
        <title>Molecular cloning and characterization of a renal organic anion transporter of the rabbit (rbOAT1).</title>
        <authorList>
            <person name="Bahn A."/>
            <person name="Knabe M."/>
            <person name="Hillemann A."/>
            <person name="Burckhardt G."/>
        </authorList>
    </citation>
    <scope>NUCLEOTIDE SEQUENCE [MRNA]</scope>
    <source>
        <tissue>Kidney</tissue>
    </source>
</reference>
<reference key="2">
    <citation type="journal article" date="2002" name="Mol. Pharmacol.">
        <title>Interaction of the metal chelator 2,3-dimercapto-1-propanesulfonate with the rabbit multispecific organic anion transporter 1 (rbOAT1).</title>
        <authorList>
            <person name="Bahn A."/>
            <person name="Knabe M."/>
            <person name="Hagos Y."/>
            <person name="Rodiger M."/>
            <person name="Godehardt S."/>
            <person name="Graber-Neufeld D.S."/>
            <person name="Evans K.K."/>
            <person name="Burckhardt G."/>
            <person name="Wright S.H."/>
        </authorList>
    </citation>
    <scope>FUNCTION</scope>
    <scope>MISCELLANEOUS</scope>
</reference>
<reference key="3">
    <citation type="journal article" date="2003" name="J. Pharmacol. Exp. Ther.">
        <title>Interaction of cysteine conjugates with human and rabbit organic anion transporter 1.</title>
        <authorList>
            <person name="Groves C.E."/>
            <person name="Munoz L."/>
            <person name="Bahn A."/>
            <person name="Burckhardt G."/>
            <person name="Wright S.H."/>
        </authorList>
    </citation>
    <scope>MISCELLANEOUS</scope>
</reference>
<comment type="function">
    <text evidence="1 2 6">Secondary active transporter that functions as a Na(+)-independent organic anion (OA)/dicarboxylate antiporter where the uptake of one molecule of OA into the cell is coupled with an efflux of one molecule of intracellular dicarboxylate such as 2-oxoglutarate or glutarate (PubMed:12391276). Mediates the uptake of OA across the basolateral side of proximal tubule epithelial cells, thereby contributing to the renal elimination of endogenous OA from the systemic circulation into the urine (By similarity). Functions as a biopterin transporters involved in the uptake and the secretion of coenzymes tetrahydrobiopterin (BH4), dihydrobiopterin (BH2) and sepiapterin to urine, thereby determining baseline levels of blood biopterins (By similarity). Transports prostaglandin E2 (PGE2) and prostaglandin F2-alpha (PGF2-alpha) and may contribute to their renal excretion (By similarity). Also mediates the uptake of cyclic nucleotides such as cAMP and cGMP (By similarity). Involved in the transport of neuroactive tryptophan metabolites kynurenate (KYNA) and xanthurenate (XA) and may contribute to their secretion from the brain (By similarity). May transport glutamate. Also involved in the disposition of uremic toxins and potentially toxic xenobiotics by the renal organic anion secretory pathway, helping reduce their undesired toxicological effects on the body (By similarity). Uremic toxins include the indoxyl sulfate (IS), hippurate/N-benzoylglycine (HA), indole acetate (IA), 3-carboxy-4- methyl-5-propyl-2-furanpropionate (CMPF) and urate (By similarity). Xenobiotics include the mycotoxin ochratoxin (OTA) (By similarity). May also contribute to the transport of organic compounds in testes across the blood-testis-barrier (By similarity). May also work as a bidirectional OA/dicarboxylate exchanger (PubMed:12391276).</text>
</comment>
<comment type="catalytic activity">
    <reaction evidence="2">
        <text>(6R)-L-erythro-5,6,7,8-tetrahydrobiopterin(out) + a dicarboxylate(in) = (6R)-L-erythro-5,6,7,8-tetrahydrobiopterin(in) + a dicarboxylate(out)</text>
        <dbReference type="Rhea" id="RHEA:76071"/>
        <dbReference type="ChEBI" id="CHEBI:28965"/>
        <dbReference type="ChEBI" id="CHEBI:59560"/>
    </reaction>
</comment>
<comment type="catalytic activity">
    <reaction evidence="2">
        <text>L-erythro-7,8-dihydrobiopterin(out) + a dicarboxylate(in) = L-erythro-7,8-dihydrobiopterin(in) + a dicarboxylate(out)</text>
        <dbReference type="Rhea" id="RHEA:76075"/>
        <dbReference type="ChEBI" id="CHEBI:28965"/>
        <dbReference type="ChEBI" id="CHEBI:43029"/>
    </reaction>
</comment>
<comment type="catalytic activity">
    <reaction evidence="2">
        <text>L-sepiapterin(out) + a dicarboxylate(in) = L-sepiapterin(in) + a dicarboxylate(out)</text>
        <dbReference type="Rhea" id="RHEA:76079"/>
        <dbReference type="ChEBI" id="CHEBI:28965"/>
        <dbReference type="ChEBI" id="CHEBI:194527"/>
    </reaction>
</comment>
<comment type="catalytic activity">
    <reaction evidence="2">
        <text>prostaglandin F2alpha(out) + a dicarboxylate(in) = prostaglandin F2alpha(in) + a dicarboxylate(out)</text>
        <dbReference type="Rhea" id="RHEA:76119"/>
        <dbReference type="ChEBI" id="CHEBI:28965"/>
        <dbReference type="ChEBI" id="CHEBI:57404"/>
    </reaction>
</comment>
<comment type="catalytic activity">
    <reaction evidence="2">
        <text>prostaglandin E2(out) + a dicarboxylate(in) = prostaglandin E2(in) + a dicarboxylate(out)</text>
        <dbReference type="Rhea" id="RHEA:76123"/>
        <dbReference type="ChEBI" id="CHEBI:28965"/>
        <dbReference type="ChEBI" id="CHEBI:606564"/>
    </reaction>
</comment>
<comment type="catalytic activity">
    <reaction evidence="1">
        <text>3',5'-cyclic AMP(out) + a dicarboxylate(in) = 3',5'-cyclic AMP(in) + a dicarboxylate(out)</text>
        <dbReference type="Rhea" id="RHEA:76127"/>
        <dbReference type="ChEBI" id="CHEBI:28965"/>
        <dbReference type="ChEBI" id="CHEBI:58165"/>
    </reaction>
</comment>
<comment type="catalytic activity">
    <reaction evidence="1">
        <text>3',5'-cyclic GMP(out) + a dicarboxylate(in) = 3',5'-cyclic GMP(in) + a dicarboxylate(out)</text>
        <dbReference type="Rhea" id="RHEA:76131"/>
        <dbReference type="ChEBI" id="CHEBI:28965"/>
        <dbReference type="ChEBI" id="CHEBI:57746"/>
    </reaction>
</comment>
<comment type="catalytic activity">
    <reaction evidence="1">
        <text>urate(out) + a dicarboxylate(in) = urate(in) + a dicarboxylate(out)</text>
        <dbReference type="Rhea" id="RHEA:76135"/>
        <dbReference type="ChEBI" id="CHEBI:17775"/>
        <dbReference type="ChEBI" id="CHEBI:28965"/>
    </reaction>
</comment>
<comment type="catalytic activity">
    <reaction evidence="2">
        <text>kynurenate(out) + glutarate(in) = kynurenate(in) + glutarate(out)</text>
        <dbReference type="Rhea" id="RHEA:75999"/>
        <dbReference type="ChEBI" id="CHEBI:30921"/>
        <dbReference type="ChEBI" id="CHEBI:58454"/>
    </reaction>
</comment>
<comment type="catalytic activity">
    <reaction evidence="2">
        <text>(indol-3-yl)acetate(out) + a dicarboxylate(in) = (indol-3-yl)acetate(in) + a dicarboxylate(out)</text>
        <dbReference type="Rhea" id="RHEA:75983"/>
        <dbReference type="ChEBI" id="CHEBI:28965"/>
        <dbReference type="ChEBI" id="CHEBI:30854"/>
    </reaction>
</comment>
<comment type="catalytic activity">
    <reaction evidence="2">
        <text>indoxyl sulfate(out) + a dicarboxylate(in) = indoxyl sulfate(in) + a dicarboxylate(out)</text>
        <dbReference type="Rhea" id="RHEA:75987"/>
        <dbReference type="ChEBI" id="CHEBI:28965"/>
        <dbReference type="ChEBI" id="CHEBI:144643"/>
    </reaction>
</comment>
<comment type="catalytic activity">
    <reaction evidence="2">
        <text>N-benzoylglycine(out) + a dicarboxylate(in) = N-benzoylglycine(in) + a dicarboxylate(out)</text>
        <dbReference type="Rhea" id="RHEA:75991"/>
        <dbReference type="ChEBI" id="CHEBI:28965"/>
        <dbReference type="ChEBI" id="CHEBI:606565"/>
    </reaction>
</comment>
<comment type="catalytic activity">
    <reaction evidence="2">
        <text>3-carboxy-4-methyl-5-propyl-2-furanpropanoate(out) + a dicarboxylate(in) = 3-carboxy-4-methyl-5-propyl-2-furanpropanoate(in) + a dicarboxylate(out)</text>
        <dbReference type="Rhea" id="RHEA:75995"/>
        <dbReference type="ChEBI" id="CHEBI:28965"/>
        <dbReference type="ChEBI" id="CHEBI:194524"/>
    </reaction>
</comment>
<comment type="subcellular location">
    <subcellularLocation>
        <location evidence="2">Basolateral cell membrane</location>
        <topology evidence="9">Multi-pass membrane protein</topology>
    </subcellularLocation>
    <subcellularLocation>
        <location evidence="2">Basal cell membrane</location>
        <topology evidence="9">Multi-pass membrane protein</topology>
    </subcellularLocation>
</comment>
<comment type="domain">
    <text evidence="3">Multiple cysteine residues are necessary for proper targeting to the plasma membrane.</text>
</comment>
<comment type="PTM">
    <text evidence="2">Glycosylated. Glycosylation is necessary for proper targeting of the transporter to the plasma membrane.</text>
</comment>
<comment type="miscellaneous">
    <text evidence="2 6 7">Involved in the renal transport of a variety of drugs with well-known nephrotoxic potential, therefore may play a role in the etiology of the drug-associated nephrotoxicity (PubMed:12538807). Uptakes the diagnostic agent PAH/para-aminohippurate and clinically used drugs (PubMed:12391276, PubMed:12538807). Mediates the bidirectional transport of PAH/para-aminohippurate (By similarity).</text>
</comment>
<comment type="similarity">
    <text evidence="9">Belongs to the major facilitator (TC 2.A.1) superfamily. Organic cation transporter (TC 2.A.1.19) family.</text>
</comment>